<organism>
    <name type="scientific">Escherichia coli (strain K12 / DH10B)</name>
    <dbReference type="NCBI Taxonomy" id="316385"/>
    <lineage>
        <taxon>Bacteria</taxon>
        <taxon>Pseudomonadati</taxon>
        <taxon>Pseudomonadota</taxon>
        <taxon>Gammaproteobacteria</taxon>
        <taxon>Enterobacterales</taxon>
        <taxon>Enterobacteriaceae</taxon>
        <taxon>Escherichia</taxon>
    </lineage>
</organism>
<comment type="function">
    <text evidence="1">Sequence-specific endonuclease that cleaves unmethylated GATC sequences. It is involved in DNA mismatch repair.</text>
</comment>
<comment type="subcellular location">
    <subcellularLocation>
        <location evidence="1">Cytoplasm</location>
    </subcellularLocation>
</comment>
<comment type="similarity">
    <text evidence="1">Belongs to the MutH family.</text>
</comment>
<sequence length="229" mass="25527">MSQPRPLLSPPETEEQLLAQAQQLSGYTLGELAALVGLVTPENLKRDKGWIGVLLEIWLGASAGSKPEQDFAALGVELKTIPVDSLGRPLETTFVCVAPLTGNSGVTWETSHVRHKLKRVLWIPVEGERSIPLAQRRVGSPLLWSPNEEEDRQLREDWEELMDMIVLGQVERITARHGEYLQIRPKAANAKALTEAIGARGERILTLPRGFYLKKNFTSALLARHFLIQ</sequence>
<dbReference type="EMBL" id="CP000948">
    <property type="protein sequence ID" value="ACB03941.1"/>
    <property type="molecule type" value="Genomic_DNA"/>
</dbReference>
<dbReference type="RefSeq" id="WP_000082201.1">
    <property type="nucleotide sequence ID" value="NC_010473.1"/>
</dbReference>
<dbReference type="SMR" id="B1XDN7"/>
<dbReference type="KEGG" id="ecd:ECDH10B_3001"/>
<dbReference type="HOGENOM" id="CLU_086669_0_0_6"/>
<dbReference type="GO" id="GO:0005737">
    <property type="term" value="C:cytoplasm"/>
    <property type="evidence" value="ECO:0007669"/>
    <property type="project" value="UniProtKB-SubCell"/>
</dbReference>
<dbReference type="GO" id="GO:0003677">
    <property type="term" value="F:DNA binding"/>
    <property type="evidence" value="ECO:0007669"/>
    <property type="project" value="InterPro"/>
</dbReference>
<dbReference type="GO" id="GO:0004519">
    <property type="term" value="F:endonuclease activity"/>
    <property type="evidence" value="ECO:0007669"/>
    <property type="project" value="UniProtKB-UniRule"/>
</dbReference>
<dbReference type="GO" id="GO:0006304">
    <property type="term" value="P:DNA modification"/>
    <property type="evidence" value="ECO:0007669"/>
    <property type="project" value="InterPro"/>
</dbReference>
<dbReference type="GO" id="GO:0006298">
    <property type="term" value="P:mismatch repair"/>
    <property type="evidence" value="ECO:0007669"/>
    <property type="project" value="UniProtKB-UniRule"/>
</dbReference>
<dbReference type="CDD" id="cd00583">
    <property type="entry name" value="MutH-like"/>
    <property type="match status" value="1"/>
</dbReference>
<dbReference type="FunFam" id="3.40.600.10:FF:000001">
    <property type="entry name" value="DNA mismatch repair protein MutH"/>
    <property type="match status" value="1"/>
</dbReference>
<dbReference type="Gene3D" id="3.40.600.10">
    <property type="entry name" value="DNA mismatch repair MutH/Restriction endonuclease, type II"/>
    <property type="match status" value="1"/>
</dbReference>
<dbReference type="HAMAP" id="MF_00759">
    <property type="entry name" value="MutH"/>
    <property type="match status" value="1"/>
</dbReference>
<dbReference type="InterPro" id="IPR004230">
    <property type="entry name" value="DNA_mismatch_repair_MutH"/>
</dbReference>
<dbReference type="InterPro" id="IPR011337">
    <property type="entry name" value="DNA_rep_MutH/RE_typeII_Sau3AI"/>
</dbReference>
<dbReference type="InterPro" id="IPR037057">
    <property type="entry name" value="DNA_rep_MutH/T2_RE_sf"/>
</dbReference>
<dbReference type="InterPro" id="IPR011335">
    <property type="entry name" value="Restrct_endonuc-II-like"/>
</dbReference>
<dbReference type="NCBIfam" id="TIGR02248">
    <property type="entry name" value="mutH_TIGR"/>
    <property type="match status" value="1"/>
</dbReference>
<dbReference type="NCBIfam" id="NF003458">
    <property type="entry name" value="PRK05070.1"/>
    <property type="match status" value="1"/>
</dbReference>
<dbReference type="Pfam" id="PF02976">
    <property type="entry name" value="MutH"/>
    <property type="match status" value="1"/>
</dbReference>
<dbReference type="SMART" id="SM00927">
    <property type="entry name" value="MutH"/>
    <property type="match status" value="1"/>
</dbReference>
<dbReference type="SUPFAM" id="SSF52980">
    <property type="entry name" value="Restriction endonuclease-like"/>
    <property type="match status" value="1"/>
</dbReference>
<accession>B1XDN7</accession>
<name>MUTH_ECODH</name>
<keyword id="KW-0963">Cytoplasm</keyword>
<keyword id="KW-0227">DNA damage</keyword>
<keyword id="KW-0234">DNA repair</keyword>
<keyword id="KW-0255">Endonuclease</keyword>
<keyword id="KW-0378">Hydrolase</keyword>
<keyword id="KW-0540">Nuclease</keyword>
<feature type="chain" id="PRO_1000133464" description="DNA mismatch repair protein MutH">
    <location>
        <begin position="1"/>
        <end position="229"/>
    </location>
</feature>
<proteinExistence type="inferred from homology"/>
<protein>
    <recommendedName>
        <fullName evidence="1">DNA mismatch repair protein MutH</fullName>
    </recommendedName>
    <alternativeName>
        <fullName evidence="1">Methyl-directed mismatch repair protein</fullName>
    </alternativeName>
</protein>
<gene>
    <name evidence="1" type="primary">mutH</name>
    <name type="ordered locus">ECDH10B_3001</name>
</gene>
<evidence type="ECO:0000255" key="1">
    <source>
        <dbReference type="HAMAP-Rule" id="MF_00759"/>
    </source>
</evidence>
<reference key="1">
    <citation type="journal article" date="2008" name="J. Bacteriol.">
        <title>The complete genome sequence of Escherichia coli DH10B: insights into the biology of a laboratory workhorse.</title>
        <authorList>
            <person name="Durfee T."/>
            <person name="Nelson R."/>
            <person name="Baldwin S."/>
            <person name="Plunkett G. III"/>
            <person name="Burland V."/>
            <person name="Mau B."/>
            <person name="Petrosino J.F."/>
            <person name="Qin X."/>
            <person name="Muzny D.M."/>
            <person name="Ayele M."/>
            <person name="Gibbs R.A."/>
            <person name="Csorgo B."/>
            <person name="Posfai G."/>
            <person name="Weinstock G.M."/>
            <person name="Blattner F.R."/>
        </authorList>
    </citation>
    <scope>NUCLEOTIDE SEQUENCE [LARGE SCALE GENOMIC DNA]</scope>
    <source>
        <strain>K12 / DH10B</strain>
    </source>
</reference>